<comment type="function">
    <text evidence="1">Catalyzes the formation of methylglyoxal from dihydroxyacetone phosphate.</text>
</comment>
<comment type="catalytic activity">
    <reaction evidence="1">
        <text>dihydroxyacetone phosphate = methylglyoxal + phosphate</text>
        <dbReference type="Rhea" id="RHEA:17937"/>
        <dbReference type="ChEBI" id="CHEBI:17158"/>
        <dbReference type="ChEBI" id="CHEBI:43474"/>
        <dbReference type="ChEBI" id="CHEBI:57642"/>
        <dbReference type="EC" id="4.2.3.3"/>
    </reaction>
</comment>
<comment type="similarity">
    <text evidence="1">Belongs to the methylglyoxal synthase family.</text>
</comment>
<organism>
    <name type="scientific">Bacillus cereus (strain ATCC 14579 / DSM 31 / CCUG 7414 / JCM 2152 / NBRC 15305 / NCIMB 9373 / NCTC 2599 / NRRL B-3711)</name>
    <dbReference type="NCBI Taxonomy" id="226900"/>
    <lineage>
        <taxon>Bacteria</taxon>
        <taxon>Bacillati</taxon>
        <taxon>Bacillota</taxon>
        <taxon>Bacilli</taxon>
        <taxon>Bacillales</taxon>
        <taxon>Bacillaceae</taxon>
        <taxon>Bacillus</taxon>
        <taxon>Bacillus cereus group</taxon>
    </lineage>
</organism>
<keyword id="KW-0456">Lyase</keyword>
<keyword id="KW-1185">Reference proteome</keyword>
<reference key="1">
    <citation type="journal article" date="2003" name="Nature">
        <title>Genome sequence of Bacillus cereus and comparative analysis with Bacillus anthracis.</title>
        <authorList>
            <person name="Ivanova N."/>
            <person name="Sorokin A."/>
            <person name="Anderson I."/>
            <person name="Galleron N."/>
            <person name="Candelon B."/>
            <person name="Kapatral V."/>
            <person name="Bhattacharyya A."/>
            <person name="Reznik G."/>
            <person name="Mikhailova N."/>
            <person name="Lapidus A."/>
            <person name="Chu L."/>
            <person name="Mazur M."/>
            <person name="Goltsman E."/>
            <person name="Larsen N."/>
            <person name="D'Souza M."/>
            <person name="Walunas T."/>
            <person name="Grechkin Y."/>
            <person name="Pusch G."/>
            <person name="Haselkorn R."/>
            <person name="Fonstein M."/>
            <person name="Ehrlich S.D."/>
            <person name="Overbeek R."/>
            <person name="Kyrpides N.C."/>
        </authorList>
    </citation>
    <scope>NUCLEOTIDE SEQUENCE [LARGE SCALE GENOMIC DNA]</scope>
    <source>
        <strain>ATCC 14579 / DSM 31 / CCUG 7414 / JCM 2152 / NBRC 15305 / NCIMB 9373 / NCTC 2599 / NRRL B-3711</strain>
    </source>
</reference>
<gene>
    <name evidence="1" type="primary">mgsA</name>
    <name type="ordered locus">BC_1533</name>
</gene>
<protein>
    <recommendedName>
        <fullName evidence="1">Methylglyoxal synthase</fullName>
        <shortName evidence="1">MGS</shortName>
        <ecNumber evidence="1">4.2.3.3</ecNumber>
    </recommendedName>
</protein>
<name>MGSA_BACCR</name>
<sequence length="131" mass="14699">MKIALIAHDKKKNDMVSFAYAYKPIFEQHELFATGTTGLRIMEATGLVITRYQSGPLGGDQEIGAMIAKNDLDMVIFFRDPLTAQPHEPDVNALLRLCDVYAIPLATNMASAEMLMHALERGDLDYRKLRK</sequence>
<evidence type="ECO:0000255" key="1">
    <source>
        <dbReference type="HAMAP-Rule" id="MF_00549"/>
    </source>
</evidence>
<dbReference type="EC" id="4.2.3.3" evidence="1"/>
<dbReference type="EMBL" id="AE016877">
    <property type="protein sequence ID" value="AAP08513.1"/>
    <property type="molecule type" value="Genomic_DNA"/>
</dbReference>
<dbReference type="RefSeq" id="NP_831312.1">
    <property type="nucleotide sequence ID" value="NC_004722.1"/>
</dbReference>
<dbReference type="RefSeq" id="WP_000684761.1">
    <property type="nucleotide sequence ID" value="NC_004722.1"/>
</dbReference>
<dbReference type="SMR" id="Q81FP3"/>
<dbReference type="STRING" id="226900.BC_1533"/>
<dbReference type="KEGG" id="bce:BC1533"/>
<dbReference type="PATRIC" id="fig|226900.8.peg.1510"/>
<dbReference type="HOGENOM" id="CLU_120420_1_0_9"/>
<dbReference type="OrthoDB" id="9787147at2"/>
<dbReference type="Proteomes" id="UP000001417">
    <property type="component" value="Chromosome"/>
</dbReference>
<dbReference type="GO" id="GO:0005829">
    <property type="term" value="C:cytosol"/>
    <property type="evidence" value="ECO:0000318"/>
    <property type="project" value="GO_Central"/>
</dbReference>
<dbReference type="GO" id="GO:0008929">
    <property type="term" value="F:methylglyoxal synthase activity"/>
    <property type="evidence" value="ECO:0000318"/>
    <property type="project" value="GO_Central"/>
</dbReference>
<dbReference type="GO" id="GO:0019242">
    <property type="term" value="P:methylglyoxal biosynthetic process"/>
    <property type="evidence" value="ECO:0000318"/>
    <property type="project" value="GO_Central"/>
</dbReference>
<dbReference type="CDD" id="cd01422">
    <property type="entry name" value="MGS"/>
    <property type="match status" value="1"/>
</dbReference>
<dbReference type="FunFam" id="3.40.50.1380:FF:000006">
    <property type="entry name" value="Methylglyoxal synthase"/>
    <property type="match status" value="1"/>
</dbReference>
<dbReference type="Gene3D" id="3.40.50.1380">
    <property type="entry name" value="Methylglyoxal synthase-like domain"/>
    <property type="match status" value="1"/>
</dbReference>
<dbReference type="HAMAP" id="MF_00549">
    <property type="entry name" value="Methylglyoxal_synth"/>
    <property type="match status" value="1"/>
</dbReference>
<dbReference type="InterPro" id="IPR004363">
    <property type="entry name" value="Methylgl_synth"/>
</dbReference>
<dbReference type="InterPro" id="IPR018148">
    <property type="entry name" value="Methylglyoxal_synth_AS"/>
</dbReference>
<dbReference type="InterPro" id="IPR011607">
    <property type="entry name" value="MGS-like_dom"/>
</dbReference>
<dbReference type="InterPro" id="IPR036914">
    <property type="entry name" value="MGS-like_dom_sf"/>
</dbReference>
<dbReference type="NCBIfam" id="TIGR00160">
    <property type="entry name" value="MGSA"/>
    <property type="match status" value="1"/>
</dbReference>
<dbReference type="NCBIfam" id="NF003559">
    <property type="entry name" value="PRK05234.1"/>
    <property type="match status" value="1"/>
</dbReference>
<dbReference type="PANTHER" id="PTHR30492">
    <property type="entry name" value="METHYLGLYOXAL SYNTHASE"/>
    <property type="match status" value="1"/>
</dbReference>
<dbReference type="PANTHER" id="PTHR30492:SF0">
    <property type="entry name" value="METHYLGLYOXAL SYNTHASE"/>
    <property type="match status" value="1"/>
</dbReference>
<dbReference type="Pfam" id="PF02142">
    <property type="entry name" value="MGS"/>
    <property type="match status" value="1"/>
</dbReference>
<dbReference type="PIRSF" id="PIRSF006614">
    <property type="entry name" value="Methylglyox_syn"/>
    <property type="match status" value="1"/>
</dbReference>
<dbReference type="SMART" id="SM00851">
    <property type="entry name" value="MGS"/>
    <property type="match status" value="1"/>
</dbReference>
<dbReference type="SUPFAM" id="SSF52335">
    <property type="entry name" value="Methylglyoxal synthase-like"/>
    <property type="match status" value="1"/>
</dbReference>
<dbReference type="PROSITE" id="PS01335">
    <property type="entry name" value="METHYLGLYOXAL_SYNTH"/>
    <property type="match status" value="1"/>
</dbReference>
<dbReference type="PROSITE" id="PS51855">
    <property type="entry name" value="MGS"/>
    <property type="match status" value="1"/>
</dbReference>
<accession>Q81FP3</accession>
<feature type="chain" id="PRO_0000178608" description="Methylglyoxal synthase">
    <location>
        <begin position="1"/>
        <end position="131"/>
    </location>
</feature>
<feature type="domain" description="MGS-like" evidence="1">
    <location>
        <begin position="1"/>
        <end position="131"/>
    </location>
</feature>
<feature type="active site" description="Proton donor/acceptor" evidence="1">
    <location>
        <position position="60"/>
    </location>
</feature>
<feature type="binding site" evidence="1">
    <location>
        <position position="8"/>
    </location>
    <ligand>
        <name>substrate</name>
    </ligand>
</feature>
<feature type="binding site" evidence="1">
    <location>
        <position position="12"/>
    </location>
    <ligand>
        <name>substrate</name>
    </ligand>
</feature>
<feature type="binding site" evidence="1">
    <location>
        <begin position="34"/>
        <end position="37"/>
    </location>
    <ligand>
        <name>substrate</name>
    </ligand>
</feature>
<feature type="binding site" evidence="1">
    <location>
        <begin position="54"/>
        <end position="55"/>
    </location>
    <ligand>
        <name>substrate</name>
    </ligand>
</feature>
<feature type="binding site" evidence="1">
    <location>
        <position position="87"/>
    </location>
    <ligand>
        <name>substrate</name>
    </ligand>
</feature>
<proteinExistence type="inferred from homology"/>